<dbReference type="EMBL" id="AM746676">
    <property type="protein sequence ID" value="CAN91001.1"/>
    <property type="molecule type" value="Genomic_DNA"/>
</dbReference>
<dbReference type="RefSeq" id="WP_012233478.1">
    <property type="nucleotide sequence ID" value="NC_010162.1"/>
</dbReference>
<dbReference type="SMR" id="A9ETE3"/>
<dbReference type="STRING" id="448385.sce0844"/>
<dbReference type="KEGG" id="scl:sce0844"/>
<dbReference type="eggNOG" id="COG0089">
    <property type="taxonomic scope" value="Bacteria"/>
</dbReference>
<dbReference type="HOGENOM" id="CLU_037562_3_2_7"/>
<dbReference type="OrthoDB" id="9793353at2"/>
<dbReference type="BioCyc" id="SCEL448385:SCE_RS04425-MONOMER"/>
<dbReference type="Proteomes" id="UP000002139">
    <property type="component" value="Chromosome"/>
</dbReference>
<dbReference type="GO" id="GO:1990904">
    <property type="term" value="C:ribonucleoprotein complex"/>
    <property type="evidence" value="ECO:0007669"/>
    <property type="project" value="UniProtKB-KW"/>
</dbReference>
<dbReference type="GO" id="GO:0005840">
    <property type="term" value="C:ribosome"/>
    <property type="evidence" value="ECO:0007669"/>
    <property type="project" value="UniProtKB-KW"/>
</dbReference>
<dbReference type="GO" id="GO:0019843">
    <property type="term" value="F:rRNA binding"/>
    <property type="evidence" value="ECO:0007669"/>
    <property type="project" value="UniProtKB-UniRule"/>
</dbReference>
<dbReference type="GO" id="GO:0003735">
    <property type="term" value="F:structural constituent of ribosome"/>
    <property type="evidence" value="ECO:0007669"/>
    <property type="project" value="InterPro"/>
</dbReference>
<dbReference type="GO" id="GO:0006412">
    <property type="term" value="P:translation"/>
    <property type="evidence" value="ECO:0007669"/>
    <property type="project" value="UniProtKB-UniRule"/>
</dbReference>
<dbReference type="FunFam" id="3.30.70.330:FF:000001">
    <property type="entry name" value="50S ribosomal protein L23"/>
    <property type="match status" value="1"/>
</dbReference>
<dbReference type="Gene3D" id="3.30.70.330">
    <property type="match status" value="1"/>
</dbReference>
<dbReference type="HAMAP" id="MF_01369_B">
    <property type="entry name" value="Ribosomal_uL23_B"/>
    <property type="match status" value="1"/>
</dbReference>
<dbReference type="InterPro" id="IPR012677">
    <property type="entry name" value="Nucleotide-bd_a/b_plait_sf"/>
</dbReference>
<dbReference type="InterPro" id="IPR013025">
    <property type="entry name" value="Ribosomal_uL23-like"/>
</dbReference>
<dbReference type="InterPro" id="IPR012678">
    <property type="entry name" value="Ribosomal_uL23/eL15/eS24_sf"/>
</dbReference>
<dbReference type="InterPro" id="IPR001014">
    <property type="entry name" value="Ribosomal_uL23_CS"/>
</dbReference>
<dbReference type="NCBIfam" id="NF004359">
    <property type="entry name" value="PRK05738.1-3"/>
    <property type="match status" value="1"/>
</dbReference>
<dbReference type="NCBIfam" id="NF004363">
    <property type="entry name" value="PRK05738.2-4"/>
    <property type="match status" value="1"/>
</dbReference>
<dbReference type="NCBIfam" id="NF004366">
    <property type="entry name" value="PRK05738.3-2"/>
    <property type="match status" value="1"/>
</dbReference>
<dbReference type="PANTHER" id="PTHR11620">
    <property type="entry name" value="60S RIBOSOMAL PROTEIN L23A"/>
    <property type="match status" value="1"/>
</dbReference>
<dbReference type="Pfam" id="PF00276">
    <property type="entry name" value="Ribosomal_L23"/>
    <property type="match status" value="1"/>
</dbReference>
<dbReference type="SUPFAM" id="SSF54189">
    <property type="entry name" value="Ribosomal proteins S24e, L23 and L15e"/>
    <property type="match status" value="1"/>
</dbReference>
<dbReference type="PROSITE" id="PS00050">
    <property type="entry name" value="RIBOSOMAL_L23"/>
    <property type="match status" value="1"/>
</dbReference>
<name>RL23_SORC5</name>
<gene>
    <name evidence="1" type="primary">rplW</name>
    <name type="ordered locus">sce0844</name>
</gene>
<reference key="1">
    <citation type="journal article" date="2007" name="Nat. Biotechnol.">
        <title>Complete genome sequence of the myxobacterium Sorangium cellulosum.</title>
        <authorList>
            <person name="Schneiker S."/>
            <person name="Perlova O."/>
            <person name="Kaiser O."/>
            <person name="Gerth K."/>
            <person name="Alici A."/>
            <person name="Altmeyer M.O."/>
            <person name="Bartels D."/>
            <person name="Bekel T."/>
            <person name="Beyer S."/>
            <person name="Bode E."/>
            <person name="Bode H.B."/>
            <person name="Bolten C.J."/>
            <person name="Choudhuri J.V."/>
            <person name="Doss S."/>
            <person name="Elnakady Y.A."/>
            <person name="Frank B."/>
            <person name="Gaigalat L."/>
            <person name="Goesmann A."/>
            <person name="Groeger C."/>
            <person name="Gross F."/>
            <person name="Jelsbak L."/>
            <person name="Jelsbak L."/>
            <person name="Kalinowski J."/>
            <person name="Kegler C."/>
            <person name="Knauber T."/>
            <person name="Konietzny S."/>
            <person name="Kopp M."/>
            <person name="Krause L."/>
            <person name="Krug D."/>
            <person name="Linke B."/>
            <person name="Mahmud T."/>
            <person name="Martinez-Arias R."/>
            <person name="McHardy A.C."/>
            <person name="Merai M."/>
            <person name="Meyer F."/>
            <person name="Mormann S."/>
            <person name="Munoz-Dorado J."/>
            <person name="Perez J."/>
            <person name="Pradella S."/>
            <person name="Rachid S."/>
            <person name="Raddatz G."/>
            <person name="Rosenau F."/>
            <person name="Rueckert C."/>
            <person name="Sasse F."/>
            <person name="Scharfe M."/>
            <person name="Schuster S.C."/>
            <person name="Suen G."/>
            <person name="Treuner-Lange A."/>
            <person name="Velicer G.J."/>
            <person name="Vorholter F.-J."/>
            <person name="Weissman K.J."/>
            <person name="Welch R.D."/>
            <person name="Wenzel S.C."/>
            <person name="Whitworth D.E."/>
            <person name="Wilhelm S."/>
            <person name="Wittmann C."/>
            <person name="Bloecker H."/>
            <person name="Puehler A."/>
            <person name="Mueller R."/>
        </authorList>
    </citation>
    <scope>NUCLEOTIDE SEQUENCE [LARGE SCALE GENOMIC DNA]</scope>
    <source>
        <strain>So ce56</strain>
    </source>
</reference>
<feature type="chain" id="PRO_1000087232" description="Large ribosomal subunit protein uL23">
    <location>
        <begin position="1"/>
        <end position="98"/>
    </location>
</feature>
<evidence type="ECO:0000255" key="1">
    <source>
        <dbReference type="HAMAP-Rule" id="MF_01369"/>
    </source>
</evidence>
<evidence type="ECO:0000305" key="2"/>
<protein>
    <recommendedName>
        <fullName evidence="1">Large ribosomal subunit protein uL23</fullName>
    </recommendedName>
    <alternativeName>
        <fullName evidence="2">50S ribosomal protein L23</fullName>
    </alternativeName>
</protein>
<keyword id="KW-1185">Reference proteome</keyword>
<keyword id="KW-0687">Ribonucleoprotein</keyword>
<keyword id="KW-0689">Ribosomal protein</keyword>
<keyword id="KW-0694">RNA-binding</keyword>
<keyword id="KW-0699">rRNA-binding</keyword>
<comment type="function">
    <text evidence="1">One of the early assembly proteins it binds 23S rRNA. One of the proteins that surrounds the polypeptide exit tunnel on the outside of the ribosome. Forms the main docking site for trigger factor binding to the ribosome.</text>
</comment>
<comment type="subunit">
    <text evidence="1">Part of the 50S ribosomal subunit. Contacts protein L29, and trigger factor when it is bound to the ribosome.</text>
</comment>
<comment type="similarity">
    <text evidence="1">Belongs to the universal ribosomal protein uL23 family.</text>
</comment>
<accession>A9ETE3</accession>
<proteinExistence type="inferred from homology"/>
<organism>
    <name type="scientific">Sorangium cellulosum (strain So ce56)</name>
    <name type="common">Polyangium cellulosum (strain So ce56)</name>
    <dbReference type="NCBI Taxonomy" id="448385"/>
    <lineage>
        <taxon>Bacteria</taxon>
        <taxon>Pseudomonadati</taxon>
        <taxon>Myxococcota</taxon>
        <taxon>Polyangia</taxon>
        <taxon>Polyangiales</taxon>
        <taxon>Polyangiaceae</taxon>
        <taxon>Sorangium</taxon>
    </lineage>
</organism>
<sequence>MQPEQIIRRPIILTEKSSRLRDQGNKVIFEVRREANKIQIKDAIQTLFKVGVVDVNTLIMRGKDKRMGRGYAKLRNWKKAIVTLKEGDEIQFFDEKAE</sequence>